<keyword id="KW-1185">Reference proteome</keyword>
<protein>
    <recommendedName>
        <fullName>Uncharacterized protein R704</fullName>
    </recommendedName>
</protein>
<dbReference type="EMBL" id="AY653733">
    <property type="protein sequence ID" value="AAV50964.1"/>
    <property type="molecule type" value="Genomic_DNA"/>
</dbReference>
<dbReference type="KEGG" id="vg:9925357"/>
<dbReference type="OrthoDB" id="3993at10239"/>
<dbReference type="Proteomes" id="UP000001134">
    <property type="component" value="Genome"/>
</dbReference>
<name>YR704_MIMIV</name>
<organism>
    <name type="scientific">Acanthamoeba polyphaga mimivirus</name>
    <name type="common">APMV</name>
    <dbReference type="NCBI Taxonomy" id="212035"/>
    <lineage>
        <taxon>Viruses</taxon>
        <taxon>Varidnaviria</taxon>
        <taxon>Bamfordvirae</taxon>
        <taxon>Nucleocytoviricota</taxon>
        <taxon>Megaviricetes</taxon>
        <taxon>Imitervirales</taxon>
        <taxon>Mimiviridae</taxon>
        <taxon>Megamimivirinae</taxon>
        <taxon>Mimivirus</taxon>
        <taxon>Mimivirus bradfordmassiliense</taxon>
    </lineage>
</organism>
<proteinExistence type="predicted"/>
<organismHost>
    <name type="scientific">Acanthamoeba polyphaga</name>
    <name type="common">Amoeba</name>
    <dbReference type="NCBI Taxonomy" id="5757"/>
</organismHost>
<reference key="1">
    <citation type="journal article" date="2004" name="Science">
        <title>The 1.2-megabase genome sequence of Mimivirus.</title>
        <authorList>
            <person name="Raoult D."/>
            <person name="Audic S."/>
            <person name="Robert C."/>
            <person name="Abergel C."/>
            <person name="Renesto P."/>
            <person name="Ogata H."/>
            <person name="La Scola B."/>
            <person name="Susan M."/>
            <person name="Claverie J.-M."/>
        </authorList>
    </citation>
    <scope>NUCLEOTIDE SEQUENCE [LARGE SCALE GENOMIC DNA]</scope>
    <source>
        <strain>Rowbotham-Bradford</strain>
    </source>
</reference>
<accession>Q5UNW4</accession>
<feature type="chain" id="PRO_0000253433" description="Uncharacterized protein R704">
    <location>
        <begin position="1"/>
        <end position="565"/>
    </location>
</feature>
<sequence>MLNSSTNNTSSPIINSIETTDIEEKYRKYYVPNDLYWGIGIENESYFMLDKTIERTGEYIKKNRRRERYSVDYNTSYDQEKLTNYLNKLFGDRDLFNIPQYVNSHTLSKTDTQGEHRTLYVIGQKNNPKYSGKSLHELFLETNNLYQLDFNHKYVFDGDTIEFITQNFYKTTVNDCVNELIMYKNKFVNDMNILMKKNNLPLLSFPKINFGLVHFRTNPNNIGIFNNGTYHINLTMPTKLNSQGEIADPILFEKRHKNAIELIKWIEPLIIALYGSPDVFSVEDNQKYSKGSLRLTASRYVSIGTYDTNIMKKGKQLNDLKDSMYLYLYDKSWYNKIYQQTDYKQCDHIGYDINYAKHLNLGIEFRILDYFPEEVLGELIKFIVLILDHSFETKIDLQSVECKEWHDFVCDALINGNTVIVPKELGLIMNQFIGFPLIKHNMSIKKYMKKLSKFLHKKYANSLCSRNMSPNMQVPKIYNINKYMWENNFLQYIPINNKNHLKVLKLYHIYSDLKSDKITFDPENNYHSILVNSDLLQESELDLDTFYEKLLKISNSKIPINKYIL</sequence>
<gene>
    <name type="ordered locus">MIMI_R704</name>
</gene>